<organism>
    <name type="scientific">Eschscholzia californica</name>
    <name type="common">California poppy</name>
    <dbReference type="NCBI Taxonomy" id="3467"/>
    <lineage>
        <taxon>Eukaryota</taxon>
        <taxon>Viridiplantae</taxon>
        <taxon>Streptophyta</taxon>
        <taxon>Embryophyta</taxon>
        <taxon>Tracheophyta</taxon>
        <taxon>Spermatophyta</taxon>
        <taxon>Magnoliopsida</taxon>
        <taxon>Ranunculales</taxon>
        <taxon>Papaveraceae</taxon>
        <taxon>Papaveroideae</taxon>
        <taxon>Eschscholzia</taxon>
    </lineage>
</organism>
<dbReference type="EC" id="2.1.1.122" evidence="4 5"/>
<dbReference type="EMBL" id="EU882977">
    <property type="protein sequence ID" value="ACO90222.1"/>
    <property type="molecule type" value="mRNA"/>
</dbReference>
<dbReference type="SMR" id="C3SBS8"/>
<dbReference type="SABIO-RK" id="C3SBS8"/>
<dbReference type="GO" id="GO:0005737">
    <property type="term" value="C:cytoplasm"/>
    <property type="evidence" value="ECO:0007669"/>
    <property type="project" value="UniProtKB-SubCell"/>
</dbReference>
<dbReference type="GO" id="GO:0030782">
    <property type="term" value="F:(S)-tetrahydroprotoberberine N-methyltransferase activity"/>
    <property type="evidence" value="ECO:0007669"/>
    <property type="project" value="UniProtKB-EC"/>
</dbReference>
<dbReference type="GO" id="GO:0032259">
    <property type="term" value="P:methylation"/>
    <property type="evidence" value="ECO:0007669"/>
    <property type="project" value="UniProtKB-KW"/>
</dbReference>
<dbReference type="CDD" id="cd02440">
    <property type="entry name" value="AdoMet_MTases"/>
    <property type="match status" value="1"/>
</dbReference>
<dbReference type="FunFam" id="3.40.50.150:FF:000554">
    <property type="entry name" value="Cation-transporting ATPase"/>
    <property type="match status" value="1"/>
</dbReference>
<dbReference type="Gene3D" id="3.40.50.150">
    <property type="entry name" value="Vaccinia Virus protein VP39"/>
    <property type="match status" value="1"/>
</dbReference>
<dbReference type="InterPro" id="IPR029063">
    <property type="entry name" value="SAM-dependent_MTases_sf"/>
</dbReference>
<dbReference type="PANTHER" id="PTHR43832">
    <property type="match status" value="1"/>
</dbReference>
<dbReference type="PANTHER" id="PTHR43832:SF1">
    <property type="entry name" value="S-ADENOSYL-L-METHIONINE-DEPENDENT METHYLTRANSFERASES SUPERFAMILY PROTEIN"/>
    <property type="match status" value="1"/>
</dbReference>
<dbReference type="Pfam" id="PF02353">
    <property type="entry name" value="CMAS"/>
    <property type="match status" value="1"/>
</dbReference>
<dbReference type="SUPFAM" id="SSF53335">
    <property type="entry name" value="S-adenosyl-L-methionine-dependent methyltransferases"/>
    <property type="match status" value="1"/>
</dbReference>
<gene>
    <name evidence="6" type="primary">TNMT</name>
</gene>
<evidence type="ECO:0000250" key="1">
    <source>
        <dbReference type="UniProtKB" id="C3SBW0"/>
    </source>
</evidence>
<evidence type="ECO:0000250" key="2">
    <source>
        <dbReference type="UniProtKB" id="P9WPB7"/>
    </source>
</evidence>
<evidence type="ECO:0000250" key="3">
    <source>
        <dbReference type="UniProtKB" id="Q108P1"/>
    </source>
</evidence>
<evidence type="ECO:0000269" key="4">
    <source>
    </source>
</evidence>
<evidence type="ECO:0000269" key="5">
    <source ref="2"/>
</evidence>
<evidence type="ECO:0000303" key="6">
    <source>
    </source>
</evidence>
<evidence type="ECO:0000305" key="7"/>
<feature type="chain" id="PRO_0000411112" description="(S)-tetrahydroprotoberberine N-methyltransferase">
    <location>
        <begin position="1"/>
        <end position="350"/>
    </location>
</feature>
<feature type="active site" evidence="2">
    <location>
        <position position="325"/>
    </location>
</feature>
<feature type="binding site" evidence="1">
    <location>
        <position position="91"/>
    </location>
    <ligand>
        <name>S-adenosyl-L-methionine</name>
        <dbReference type="ChEBI" id="CHEBI:59789"/>
    </ligand>
</feature>
<feature type="binding site" evidence="1">
    <location>
        <position position="129"/>
    </location>
    <ligand>
        <name>S-adenosyl-L-methionine</name>
        <dbReference type="ChEBI" id="CHEBI:59789"/>
    </ligand>
</feature>
<feature type="binding site" evidence="1">
    <location>
        <position position="153"/>
    </location>
    <ligand>
        <name>S-adenosyl-L-methionine</name>
        <dbReference type="ChEBI" id="CHEBI:59789"/>
    </ligand>
</feature>
<feature type="binding site" evidence="1">
    <location>
        <position position="157"/>
    </location>
    <ligand>
        <name>S-adenosyl-L-methionine</name>
        <dbReference type="ChEBI" id="CHEBI:59789"/>
    </ligand>
</feature>
<feature type="binding site" evidence="1">
    <location>
        <position position="179"/>
    </location>
    <ligand>
        <name>S-adenosyl-L-methionine</name>
        <dbReference type="ChEBI" id="CHEBI:59789"/>
    </ligand>
</feature>
<feature type="binding site" evidence="1">
    <location>
        <position position="180"/>
    </location>
    <ligand>
        <name>S-adenosyl-L-methionine</name>
        <dbReference type="ChEBI" id="CHEBI:59789"/>
    </ligand>
</feature>
<feature type="binding site" evidence="1">
    <location>
        <position position="195"/>
    </location>
    <ligand>
        <name>S-adenosyl-L-methionine</name>
        <dbReference type="ChEBI" id="CHEBI:59789"/>
    </ligand>
</feature>
<name>TNMT_ESCCA</name>
<reference key="1">
    <citation type="journal article" date="2009" name="Plant J.">
        <title>Targeted metabolite and transcript profiling for elucidating enzyme function: isolation of novel N-methyltransferases from three benzylisoquinoline alkaloid-producing species.</title>
        <authorList>
            <consortium name="Natural Products Genomics Resource (NAPGEN)"/>
            <person name="Liscombe D.K."/>
            <person name="Ziegler J."/>
            <person name="Schmidt J."/>
            <person name="Ammer C."/>
            <person name="Facchini P.J."/>
        </authorList>
    </citation>
    <scope>NUCLEOTIDE SEQUENCE [MRNA]</scope>
    <scope>FUNCTION</scope>
    <scope>CATALYTIC ACTIVITY</scope>
    <scope>BIOPHYSICOCHEMICAL PROPERTIES</scope>
    <scope>INDUCTION BY ELICITOR</scope>
    <scope>PATHWAY</scope>
</reference>
<reference key="2">
    <citation type="journal article" date="1990" name="Phytochemistry">
        <title>Partial purification and properties of S-adenosyl-l-methionine: (S)-tetrahydroprotoberberinecis-N-methyltransferase from suspension-cultured cells of Eschscholtzia and Corydalis.</title>
        <authorList>
            <person name="Rueffer M."/>
            <person name="Zumstein G."/>
            <person name="Zenk M."/>
        </authorList>
    </citation>
    <scope>FUNCTION</scope>
    <scope>CATALYTIC ACTIVITY</scope>
    <scope>BIOPHYSICOCHEMICAL PROPERTIES</scope>
    <scope>PATHWAY</scope>
</reference>
<accession>C3SBS8</accession>
<sequence length="350" mass="40302">MGSSAGEIMGRLMKGEIEDEELKKLIRHQWDRRIEWGYKPTHEKQLAFNLDFIKGLKEMVMSGEIDTMNKETYELPTAFLEAVFGKTVKQSCCYFKDENSTIDEAEEAAHELYCERAQIKDGQTVLDIGCGQGGLVLYIAEKYKNCHVTGLTNSKAQANYIEQQAEKLELTNVDVIFADVTKFDTDKTYDRILVVETIEHMKNIQLFMKKLSTWMTEDSLLFVDHISHKTFNHNFEALDEDDWYSGFIFPKGCVTILSSSTLLYFQDDVSALDHWVVNGMHMARSVEAWRKKLDETIEAAREILEPGLGSKEAVNQVITHIRTFCIGGYEQFSYNNGEEWMITQILFKKK</sequence>
<keyword id="KW-0963">Cytoplasm</keyword>
<keyword id="KW-0489">Methyltransferase</keyword>
<keyword id="KW-0949">S-adenosyl-L-methionine</keyword>
<keyword id="KW-0808">Transferase</keyword>
<proteinExistence type="evidence at protein level"/>
<protein>
    <recommendedName>
        <fullName evidence="6">(S)-tetrahydroprotoberberine N-methyltransferase</fullName>
        <shortName evidence="6">EcTNMT</shortName>
        <ecNumber evidence="4 5">2.1.1.122</ecNumber>
    </recommendedName>
</protein>
<comment type="function">
    <text evidence="4 5">N-methyltransferase with a broad substrate range, accepting protoberberine alkaloids (R,S)-stylopine, (R,S)-nandinine and (R,S)-tetrahydropalmatine, and to a lesser extent (R,S)-canadine, (R,S)-tetrahydrogroenlandicine (cheilanthifoline) and (S)-scoulerine.</text>
</comment>
<comment type="catalytic activity">
    <reaction evidence="4 5">
        <text>(S)-stylopine + S-adenosyl-L-methionine = (S)-cis-N-methylstylopine + S-adenosyl-L-homocysteine</text>
        <dbReference type="Rhea" id="RHEA:75975"/>
        <dbReference type="ChEBI" id="CHEBI:444"/>
        <dbReference type="ChEBI" id="CHEBI:18285"/>
        <dbReference type="ChEBI" id="CHEBI:57856"/>
        <dbReference type="ChEBI" id="CHEBI:59789"/>
    </reaction>
</comment>
<comment type="catalytic activity">
    <reaction evidence="4">
        <text>(S)-tetrahydropalmatine + S-adenosyl-L-methionine = (S)-cis-N-methyltetrahydropalmatine + S-adenosyl-L-homocysteine</text>
        <dbReference type="Rhea" id="RHEA:76047"/>
        <dbReference type="ChEBI" id="CHEBI:16563"/>
        <dbReference type="ChEBI" id="CHEBI:57856"/>
        <dbReference type="ChEBI" id="CHEBI:59789"/>
        <dbReference type="ChEBI" id="CHEBI:194514"/>
    </reaction>
</comment>
<comment type="catalytic activity">
    <reaction evidence="4 5">
        <text>(S)-canadine + S-adenosyl-L-methionine = (S)-cis-N-methylcanadine + S-adenosyl-L-homocysteine</text>
        <dbReference type="Rhea" id="RHEA:12805"/>
        <dbReference type="ChEBI" id="CHEBI:16592"/>
        <dbReference type="ChEBI" id="CHEBI:50540"/>
        <dbReference type="ChEBI" id="CHEBI:57856"/>
        <dbReference type="ChEBI" id="CHEBI:59789"/>
        <dbReference type="EC" id="2.1.1.122"/>
    </reaction>
</comment>
<comment type="catalytic activity">
    <reaction evidence="4">
        <text>(S)-scoulerine + S-adenosyl-L-methionine = (S)-cis-N-methylscoulerine + S-adenosyl-L-homocysteine</text>
        <dbReference type="Rhea" id="RHEA:76051"/>
        <dbReference type="ChEBI" id="CHEBI:17129"/>
        <dbReference type="ChEBI" id="CHEBI:57856"/>
        <dbReference type="ChEBI" id="CHEBI:59789"/>
        <dbReference type="ChEBI" id="CHEBI:76923"/>
    </reaction>
</comment>
<comment type="biophysicochemical properties">
    <kinetics>
        <KM evidence="4">40 uM for (R,S)-stylopine</KM>
        <KM evidence="4">32 uM for S-adenosyl-L-methionine</KM>
        <KM evidence="5">6.4 uM for (S)-canadine</KM>
        <KM evidence="5">3.1 uM for (S)-stylopine</KM>
        <KM evidence="5">12 uM for S-adenosyl-L-methionine</KM>
        <Vmax evidence="4">10.3 pmol/sec/mg enzyme toward S-adenosyl-L-methionine</Vmax>
    </kinetics>
    <phDependence>
        <text evidence="5">Optimum pH is 8.</text>
    </phDependence>
    <temperatureDependence>
        <text evidence="5">Optimum temperature is 40 degrees Celsius.</text>
    </temperatureDependence>
</comment>
<comment type="pathway">
    <text evidence="4 5">Alkaloid biosynthesis.</text>
</comment>
<comment type="subunit">
    <text evidence="3">Homodimer.</text>
</comment>
<comment type="subcellular location">
    <subcellularLocation>
        <location evidence="7">Cytoplasm</location>
    </subcellularLocation>
</comment>
<comment type="induction">
    <text evidence="4">Up-regulated 2 hours after elicitor treatment.</text>
</comment>
<comment type="similarity">
    <text evidence="7">Belongs to the CFA/CMAS family.</text>
</comment>